<accession>P10190</accession>
<reference key="1">
    <citation type="journal article" date="1988" name="J. Gen. Virol.">
        <title>The complete DNA sequence of the long unique region in the genome of herpes simplex virus type 1.</title>
        <authorList>
            <person name="McGeoch D.J."/>
            <person name="Dalrymple M.A."/>
            <person name="Davison A.J."/>
            <person name="Dolan A."/>
            <person name="Frame M.C."/>
            <person name="McNab D."/>
            <person name="Perry L.J."/>
            <person name="Scott J.E."/>
            <person name="Taylor P."/>
        </authorList>
    </citation>
    <scope>NUCLEOTIDE SEQUENCE [GENOMIC DNA]</scope>
</reference>
<reference key="2">
    <citation type="journal article" date="1988" name="J. Virol.">
        <title>Structures of herpes simplex virus type 1 genes required for replication of virus DNA.</title>
        <authorList>
            <person name="McGeoch D.J."/>
            <person name="Dalrymple M.A."/>
            <person name="Dolan A."/>
            <person name="McNab D."/>
            <person name="Perry L.J."/>
            <person name="Taylor P."/>
            <person name="Challberg M.D."/>
        </authorList>
    </citation>
    <scope>NUCLEOTIDE SEQUENCE [GENOMIC DNA] OF 1-80</scope>
</reference>
<reference key="3">
    <citation type="journal article" date="2001" name="J. Virol.">
        <title>The UL6 gene product forms the portal for entry of DNA into the herpes simplex virus capsid.</title>
        <authorList>
            <person name="Newcomb W.W."/>
            <person name="Juhas R.M."/>
            <person name="Thomsen D.R."/>
            <person name="Homa F.L."/>
            <person name="Burch A.D."/>
            <person name="Weller S.K."/>
            <person name="Brown J.C."/>
        </authorList>
    </citation>
    <scope>FUNCTION</scope>
</reference>
<reference key="4">
    <citation type="journal article" date="2003" name="J. Virol.">
        <title>Herpes simplex virus type 1 portal protein UL6 interacts with the putative terminase subunits UL15 and UL28.</title>
        <authorList>
            <person name="White C.A."/>
            <person name="Stow N.D."/>
            <person name="Patel A.H."/>
            <person name="Hughes M."/>
            <person name="Preston V.G."/>
        </authorList>
    </citation>
    <scope>INTERACTION WITH UL15 AND UL28</scope>
    <scope>SUBCELLULAR LOCATION</scope>
</reference>
<reference key="5">
    <citation type="journal article" date="2004" name="J. Virol.">
        <title>Structure and polymorphism of the UL6 portal protein of herpes simplex virus type 1.</title>
        <authorList>
            <person name="Trus B.L."/>
            <person name="Cheng N."/>
            <person name="Newcomb W.W."/>
            <person name="Homa F.L."/>
            <person name="Brown J.C."/>
            <person name="Steven A.C."/>
        </authorList>
    </citation>
    <scope>HOMODODECAMERIZATION</scope>
</reference>
<reference key="6">
    <citation type="journal article" date="2006" name="J. Virol.">
        <title>Herpes simplex virus 1 DNA packaging proteins encoded by UL6, UL15, UL17, UL28, and UL33 are located on the external surface of the viral capsid.</title>
        <authorList>
            <person name="Wills E."/>
            <person name="Scholtes L."/>
            <person name="Baines J.D."/>
        </authorList>
    </citation>
    <scope>SUBCELLULAR LOCATION</scope>
</reference>
<reference key="7">
    <citation type="journal article" date="2009" name="J. Virol.">
        <title>The putative leucine zipper of the UL6-encoded portal protein of herpes simplex virus 1 is necessary for interaction with pUL15 and pUL28 and their association with capsids.</title>
        <authorList>
            <person name="Yang K."/>
            <person name="Wills E."/>
            <person name="Baines J.D."/>
        </authorList>
    </citation>
    <scope>INTERACTION WITH TRM1 AND TRM3</scope>
</reference>
<reference key="8">
    <citation type="journal article" date="2011" name="J. Virol.">
        <title>Disulfide bond formation in the herpes simplex virus 1 UL6 protein is required for portal ring formation and genome encapsidation.</title>
        <authorList>
            <person name="Albright B.S."/>
            <person name="Nellissery J."/>
            <person name="Szczepaniak R."/>
            <person name="Weller S.K."/>
        </authorList>
    </citation>
    <scope>MUTAGENESIS OF CYS-145; CYS-166 AND CYS-254</scope>
</reference>
<protein>
    <recommendedName>
        <fullName evidence="1">Portal protein</fullName>
    </recommendedName>
</protein>
<organism>
    <name type="scientific">Human herpesvirus 1 (strain 17)</name>
    <name type="common">HHV-1</name>
    <name type="synonym">Human herpes simplex virus 1</name>
    <dbReference type="NCBI Taxonomy" id="10299"/>
    <lineage>
        <taxon>Viruses</taxon>
        <taxon>Duplodnaviria</taxon>
        <taxon>Heunggongvirae</taxon>
        <taxon>Peploviricota</taxon>
        <taxon>Herviviricetes</taxon>
        <taxon>Herpesvirales</taxon>
        <taxon>Orthoherpesviridae</taxon>
        <taxon>Alphaherpesvirinae</taxon>
        <taxon>Simplexvirus</taxon>
        <taxon>Simplexvirus humanalpha1</taxon>
        <taxon>Human herpesvirus 1</taxon>
    </lineage>
</organism>
<comment type="function">
    <text evidence="1 3">Forms a portal in the viral capsid through which viral DNA is translocated during DNA packaging. Assembles as a dodecamer at a single fivefold axe of the T=16 icosahedric capsid. Binds to the molecular motor that translocates the viral DNA, termed terminase.</text>
</comment>
<comment type="subunit">
    <text evidence="1 4 6">Homododecamerizes. Interacts with terminase subunits TRM1 and TRM3.</text>
</comment>
<comment type="subcellular location">
    <subcellularLocation>
        <location evidence="1 5">Virion</location>
    </subcellularLocation>
    <subcellularLocation>
        <location evidence="1 4">Host nucleus</location>
    </subcellularLocation>
</comment>
<comment type="similarity">
    <text evidence="1">Belongs to the herpesviridae portal protein family.</text>
</comment>
<sequence>MTAPRSRAPTTRARGDTEALCSPEDGWVKVHPSPGTMLFREILHGQLGYTEGQGVYNVVRSSEATTRQLQAAIFHALLNATTYRDLEADWLGHVAARGLQPQRLVRRYRNAREADIAGVAERVFDTWRNTLRTTLLDFAHGLVACFAPGGPSGPSSFPKYIDWLTCLGLVPILRKRQEGGVTQGLRAFLKQHPLTRQLATVAEAAERAGPGFFELALAFDSTRVADYDRVYIYYNHRRGDWLVRDPISGQRGECLVLWPPLWTGDRLVFDSPVQRLFPEIVACHSLREHAHVCRLRNTASVKVLLGRKSDSERGVAGAARVVNKVLGEDDETKAGSAASRLVRLIINMKGMRHVGDINDTVRSYLDEAGGHLIDAPAVDGTLPGFGKGGNSRGSAGQDQGGRAPQLRQAFRTAVVNNINGVLEGYINNLFGTIERLRETNAGLATQLQERDRELRRATAGALERQQRAADLAAESVTGGCGSRPAGADLLRADYDIIDVSKSMDDDTYVANSFQHPYIPSYAQDLERLSRLWEHELVRCFKILCHRNNQGQETSISYSSGAIAAFVAPYFESVLRAPRVGAPITGSDVILGEEELWDAVFKKTRLQTYLTDIAALFVADVQHAALPPPPSPVGADFRPGASPRGRSRSRSPGRTARGAPDQGGGIGHRDGRRDGRR</sequence>
<keyword id="KW-1015">Disulfide bond</keyword>
<keyword id="KW-1048">Host nucleus</keyword>
<keyword id="KW-1185">Reference proteome</keyword>
<keyword id="KW-0231">Viral genome packaging</keyword>
<keyword id="KW-1188">Viral release from host cell</keyword>
<keyword id="KW-0946">Virion</keyword>
<gene>
    <name type="primary">UL6</name>
</gene>
<organismHost>
    <name type="scientific">Homo sapiens</name>
    <name type="common">Human</name>
    <dbReference type="NCBI Taxonomy" id="9606"/>
</organismHost>
<proteinExistence type="evidence at protein level"/>
<name>PORTL_HHV11</name>
<dbReference type="EMBL" id="X14112">
    <property type="protein sequence ID" value="CAA32342.1"/>
    <property type="molecule type" value="Genomic_DNA"/>
</dbReference>
<dbReference type="EMBL" id="AH002360">
    <property type="protein sequence ID" value="AAA45818.2"/>
    <property type="molecule type" value="Genomic_DNA"/>
</dbReference>
<dbReference type="PIR" id="F28133">
    <property type="entry name" value="WMBEX6"/>
</dbReference>
<dbReference type="SMR" id="P10190"/>
<dbReference type="BioGRID" id="971454">
    <property type="interactions" value="1"/>
</dbReference>
<dbReference type="IntAct" id="P10190">
    <property type="interactions" value="2"/>
</dbReference>
<dbReference type="MINT" id="P10190"/>
<dbReference type="TCDB" id="1.W.4.1.1">
    <property type="family name" value="the viral portal protein 4 (ppp4) family"/>
</dbReference>
<dbReference type="Proteomes" id="UP000009294">
    <property type="component" value="Segment"/>
</dbReference>
<dbReference type="GO" id="GO:0042025">
    <property type="term" value="C:host cell nucleus"/>
    <property type="evidence" value="ECO:0007669"/>
    <property type="project" value="UniProtKB-SubCell"/>
</dbReference>
<dbReference type="GO" id="GO:0044423">
    <property type="term" value="C:virion component"/>
    <property type="evidence" value="ECO:0007669"/>
    <property type="project" value="UniProtKB-KW"/>
</dbReference>
<dbReference type="GO" id="GO:0051276">
    <property type="term" value="P:chromosome organization"/>
    <property type="evidence" value="ECO:0007669"/>
    <property type="project" value="InterPro"/>
</dbReference>
<dbReference type="HAMAP" id="MF_04012">
    <property type="entry name" value="HSV_PORTL"/>
    <property type="match status" value="1"/>
</dbReference>
<dbReference type="InterPro" id="IPR002660">
    <property type="entry name" value="Herpes_Portal"/>
</dbReference>
<dbReference type="Pfam" id="PF01763">
    <property type="entry name" value="Herpes_UL6"/>
    <property type="match status" value="1"/>
</dbReference>
<feature type="chain" id="PRO_0000115903" description="Portal protein">
    <location>
        <begin position="1"/>
        <end position="676"/>
    </location>
</feature>
<feature type="region of interest" description="Disordered" evidence="2">
    <location>
        <begin position="383"/>
        <end position="404"/>
    </location>
</feature>
<feature type="region of interest" description="Putative leucine zipper motif" evidence="1 8">
    <location>
        <begin position="422"/>
        <end position="443"/>
    </location>
</feature>
<feature type="region of interest" description="Disordered" evidence="2">
    <location>
        <begin position="627"/>
        <end position="676"/>
    </location>
</feature>
<feature type="compositionally biased region" description="Basic and acidic residues" evidence="2">
    <location>
        <begin position="666"/>
        <end position="676"/>
    </location>
</feature>
<feature type="disulfide bond" description="Interchain" evidence="1 7">
    <location>
        <position position="166"/>
    </location>
</feature>
<feature type="disulfide bond" description="Interchain" evidence="1 7">
    <location>
        <position position="254"/>
    </location>
</feature>
<feature type="mutagenesis site" description="Complete loss of nuclear localization." evidence="7">
    <original>C</original>
    <variation>A</variation>
    <location>
        <position position="145"/>
    </location>
</feature>
<feature type="mutagenesis site" description="Complete loss of portal ring formation." evidence="7">
    <original>C</original>
    <variation>A</variation>
    <location>
        <position position="166"/>
    </location>
</feature>
<feature type="mutagenesis site" description="Complete loss of portal ring formation." evidence="7">
    <original>C</original>
    <variation>A</variation>
    <location>
        <position position="254"/>
    </location>
</feature>
<evidence type="ECO:0000255" key="1">
    <source>
        <dbReference type="HAMAP-Rule" id="MF_04012"/>
    </source>
</evidence>
<evidence type="ECO:0000256" key="2">
    <source>
        <dbReference type="SAM" id="MobiDB-lite"/>
    </source>
</evidence>
<evidence type="ECO:0000269" key="3">
    <source>
    </source>
</evidence>
<evidence type="ECO:0000269" key="4">
    <source>
    </source>
</evidence>
<evidence type="ECO:0000269" key="5">
    <source>
    </source>
</evidence>
<evidence type="ECO:0000269" key="6">
    <source>
    </source>
</evidence>
<evidence type="ECO:0000269" key="7">
    <source>
    </source>
</evidence>
<evidence type="ECO:0000305" key="8">
    <source>
    </source>
</evidence>